<organism>
    <name type="scientific">Influenza A virus (strain A/Turkey/Minnesota/501/1978 H6N8)</name>
    <dbReference type="NCBI Taxonomy" id="387259"/>
    <lineage>
        <taxon>Viruses</taxon>
        <taxon>Riboviria</taxon>
        <taxon>Orthornavirae</taxon>
        <taxon>Negarnaviricota</taxon>
        <taxon>Polyploviricotina</taxon>
        <taxon>Insthoviricetes</taxon>
        <taxon>Articulavirales</taxon>
        <taxon>Orthomyxoviridae</taxon>
        <taxon>Alphainfluenzavirus</taxon>
        <taxon>Alphainfluenzavirus influenzae</taxon>
        <taxon>Influenza A virus</taxon>
    </lineage>
</organism>
<protein>
    <recommendedName>
        <fullName evidence="1">Neuraminidase</fullName>
        <ecNumber evidence="1">3.2.1.18</ecNumber>
    </recommendedName>
</protein>
<feature type="chain" id="PRO_0000078717" description="Neuraminidase">
    <location>
        <begin position="1"/>
        <end position="470"/>
    </location>
</feature>
<feature type="topological domain" description="Intravirion" evidence="1">
    <location>
        <begin position="1"/>
        <end position="14"/>
    </location>
</feature>
<feature type="transmembrane region" description="Helical" evidence="1">
    <location>
        <begin position="15"/>
        <end position="35"/>
    </location>
</feature>
<feature type="topological domain" description="Virion surface" evidence="1">
    <location>
        <begin position="36"/>
        <end position="470"/>
    </location>
</feature>
<feature type="region of interest" description="Involved in apical transport and lipid raft association" evidence="1">
    <location>
        <begin position="11"/>
        <end position="32"/>
    </location>
</feature>
<feature type="region of interest" description="Hypervariable stalk region" evidence="1">
    <location>
        <begin position="32"/>
        <end position="86"/>
    </location>
</feature>
<feature type="region of interest" description="Head of neuraminidase" evidence="1">
    <location>
        <begin position="89"/>
        <end position="470"/>
    </location>
</feature>
<feature type="active site" description="Proton donor/acceptor" evidence="1">
    <location>
        <position position="149"/>
    </location>
</feature>
<feature type="active site" description="Nucleophile" evidence="1">
    <location>
        <position position="402"/>
    </location>
</feature>
<feature type="binding site" evidence="1">
    <location>
        <position position="116"/>
    </location>
    <ligand>
        <name>substrate</name>
    </ligand>
</feature>
<feature type="binding site" evidence="1">
    <location>
        <position position="150"/>
    </location>
    <ligand>
        <name>substrate</name>
    </ligand>
</feature>
<feature type="binding site" evidence="1">
    <location>
        <begin position="275"/>
        <end position="276"/>
    </location>
    <ligand>
        <name>substrate</name>
    </ligand>
</feature>
<feature type="binding site" evidence="1">
    <location>
        <position position="291"/>
    </location>
    <ligand>
        <name>substrate</name>
    </ligand>
</feature>
<feature type="binding site" evidence="1">
    <location>
        <position position="292"/>
    </location>
    <ligand>
        <name>Ca(2+)</name>
        <dbReference type="ChEBI" id="CHEBI:29108"/>
    </ligand>
</feature>
<feature type="binding site" evidence="1">
    <location>
        <position position="296"/>
    </location>
    <ligand>
        <name>Ca(2+)</name>
        <dbReference type="ChEBI" id="CHEBI:29108"/>
    </ligand>
</feature>
<feature type="binding site" evidence="1">
    <location>
        <position position="322"/>
    </location>
    <ligand>
        <name>Ca(2+)</name>
        <dbReference type="ChEBI" id="CHEBI:29108"/>
    </ligand>
</feature>
<feature type="binding site" evidence="1">
    <location>
        <position position="368"/>
    </location>
    <ligand>
        <name>substrate</name>
    </ligand>
</feature>
<feature type="glycosylation site" description="N-linked (GlcNAc...) asparagine; by host" evidence="1">
    <location>
        <position position="46"/>
    </location>
</feature>
<feature type="glycosylation site" description="N-linked (GlcNAc...) asparagine; by host" evidence="1">
    <location>
        <position position="54"/>
    </location>
</feature>
<feature type="glycosylation site" description="N-linked (GlcNAc...) asparagine; by host" evidence="1">
    <location>
        <position position="84"/>
    </location>
</feature>
<feature type="glycosylation site" description="N-linked (GlcNAc...) asparagine; by host" evidence="1">
    <location>
        <position position="144"/>
    </location>
</feature>
<feature type="glycosylation site" description="N-linked (GlcNAc...) asparagine; by host" evidence="1">
    <location>
        <position position="293"/>
    </location>
</feature>
<feature type="glycosylation site" description="N-linked (GlcNAc...) asparagine; by host" evidence="1">
    <location>
        <position position="398"/>
    </location>
</feature>
<feature type="disulfide bond" evidence="1">
    <location>
        <begin position="90"/>
        <end position="417"/>
    </location>
</feature>
<feature type="disulfide bond" evidence="1">
    <location>
        <begin position="122"/>
        <end position="127"/>
    </location>
</feature>
<feature type="disulfide bond" evidence="1">
    <location>
        <begin position="182"/>
        <end position="229"/>
    </location>
</feature>
<feature type="disulfide bond" evidence="1">
    <location>
        <begin position="231"/>
        <end position="236"/>
    </location>
</feature>
<feature type="disulfide bond" evidence="1">
    <location>
        <begin position="277"/>
        <end position="290"/>
    </location>
</feature>
<feature type="disulfide bond" evidence="1">
    <location>
        <begin position="279"/>
        <end position="288"/>
    </location>
</feature>
<feature type="disulfide bond" evidence="1">
    <location>
        <begin position="316"/>
        <end position="335"/>
    </location>
</feature>
<feature type="disulfide bond" evidence="1">
    <location>
        <begin position="421"/>
        <end position="446"/>
    </location>
</feature>
<feature type="sequence conflict" description="In Ref. 1; AAA43410." ref="1">
    <original>K</original>
    <variation>R</variation>
    <location>
        <position position="100"/>
    </location>
</feature>
<feature type="sequence conflict" description="In Ref. 1; AAA43410." ref="1">
    <original>G</original>
    <variation>R</variation>
    <location>
        <position position="192"/>
    </location>
</feature>
<keyword id="KW-0106">Calcium</keyword>
<keyword id="KW-1015">Disulfide bond</keyword>
<keyword id="KW-0325">Glycoprotein</keyword>
<keyword id="KW-0326">Glycosidase</keyword>
<keyword id="KW-1032">Host cell membrane</keyword>
<keyword id="KW-1043">Host membrane</keyword>
<keyword id="KW-0378">Hydrolase</keyword>
<keyword id="KW-0472">Membrane</keyword>
<keyword id="KW-0479">Metal-binding</keyword>
<keyword id="KW-0735">Signal-anchor</keyword>
<keyword id="KW-0812">Transmembrane</keyword>
<keyword id="KW-1133">Transmembrane helix</keyword>
<keyword id="KW-0946">Virion</keyword>
<gene>
    <name evidence="1" type="primary">NA</name>
</gene>
<evidence type="ECO:0000255" key="1">
    <source>
        <dbReference type="HAMAP-Rule" id="MF_04071"/>
    </source>
</evidence>
<sequence length="470" mass="52225">MNPNQKIITIGSVSLGLVVLNILLHIVSITITVLVLPGNGNSGNCNETIIREYNETVRIEKVTQRHNTNVIEYIERPESDHFMNNTEPLCDAKGFAPFSKDNGIRIGSRGHIFVIREPFVSCSPTECRTFFLTQGSLLNDKHSNGTVKDRSPYRTLMSVEIGQSPNVYQARFEAVAWSATACHDGKKWMTIGVTGPDAKAVAVVHYGGIPTDVINSWAGNILRTQESSCTCIQGECYWVMTDGPANRQAQYRVFKAKQGKIIGQTEISFNGGHIEECSCYPNEGKVECVCRDNWTGTNRPVLVISSDLSYRVGYLCAGLPSDTPRGEDSQFTGSCTSPMGNQGYGVKGFGFRQGNDVWMGRTISRTSRSGFEILKIRNGWTQNSKEQIKKQVVVDNLNWSGYSGSFTLPVELTKRNCLVPCFWVEMIRGKPEEKTIWTSSSSIVMCGVEHEIADWSWHDGAILPFDIDKM</sequence>
<proteinExistence type="inferred from homology"/>
<dbReference type="EC" id="3.2.1.18" evidence="1"/>
<dbReference type="EMBL" id="L06588">
    <property type="protein sequence ID" value="AAA43410.1"/>
    <property type="molecule type" value="Genomic_RNA"/>
</dbReference>
<dbReference type="EMBL" id="CY014773">
    <property type="protein sequence ID" value="ABI84676.1"/>
    <property type="molecule type" value="Genomic_RNA"/>
</dbReference>
<dbReference type="SMR" id="Q07585"/>
<dbReference type="CAZy" id="GH34">
    <property type="family name" value="Glycoside Hydrolase Family 34"/>
</dbReference>
<dbReference type="GlyCosmos" id="Q07585">
    <property type="glycosylation" value="6 sites, No reported glycans"/>
</dbReference>
<dbReference type="GO" id="GO:0020002">
    <property type="term" value="C:host cell plasma membrane"/>
    <property type="evidence" value="ECO:0007669"/>
    <property type="project" value="UniProtKB-SubCell"/>
</dbReference>
<dbReference type="GO" id="GO:0016020">
    <property type="term" value="C:membrane"/>
    <property type="evidence" value="ECO:0007669"/>
    <property type="project" value="UniProtKB-UniRule"/>
</dbReference>
<dbReference type="GO" id="GO:0055036">
    <property type="term" value="C:virion membrane"/>
    <property type="evidence" value="ECO:0007669"/>
    <property type="project" value="UniProtKB-SubCell"/>
</dbReference>
<dbReference type="GO" id="GO:0004308">
    <property type="term" value="F:exo-alpha-sialidase activity"/>
    <property type="evidence" value="ECO:0007669"/>
    <property type="project" value="UniProtKB-UniRule"/>
</dbReference>
<dbReference type="GO" id="GO:0046872">
    <property type="term" value="F:metal ion binding"/>
    <property type="evidence" value="ECO:0007669"/>
    <property type="project" value="UniProtKB-UniRule"/>
</dbReference>
<dbReference type="GO" id="GO:0005975">
    <property type="term" value="P:carbohydrate metabolic process"/>
    <property type="evidence" value="ECO:0007669"/>
    <property type="project" value="InterPro"/>
</dbReference>
<dbReference type="GO" id="GO:0046761">
    <property type="term" value="P:viral budding from plasma membrane"/>
    <property type="evidence" value="ECO:0007669"/>
    <property type="project" value="UniProtKB-UniRule"/>
</dbReference>
<dbReference type="Gene3D" id="2.120.10.10">
    <property type="match status" value="1"/>
</dbReference>
<dbReference type="HAMAP" id="MF_04071">
    <property type="entry name" value="INFV_NRAM"/>
    <property type="match status" value="1"/>
</dbReference>
<dbReference type="InterPro" id="IPR001860">
    <property type="entry name" value="Glyco_hydro_34"/>
</dbReference>
<dbReference type="InterPro" id="IPR036278">
    <property type="entry name" value="Sialidase_sf"/>
</dbReference>
<dbReference type="Pfam" id="PF00064">
    <property type="entry name" value="Neur"/>
    <property type="match status" value="1"/>
</dbReference>
<dbReference type="SUPFAM" id="SSF50939">
    <property type="entry name" value="Sialidases"/>
    <property type="match status" value="1"/>
</dbReference>
<comment type="function">
    <text evidence="1">Catalyzes the removal of terminal sialic acid residues from viral and cellular glycoconjugates. Cleaves off the terminal sialic acids on the glycosylated HA during virus budding to facilitate virus release. Additionally helps virus spread through the circulation by further removing sialic acids from the cell surface. These cleavages prevent self-aggregation and ensure the efficient spread of the progeny virus from cell to cell. Otherwise, infection would be limited to one round of replication. Described as a receptor-destroying enzyme because it cleaves a terminal sialic acid from the cellular receptors. May facilitate viral invasion of the upper airways by cleaving the sialic acid moieties on the mucin of the airway epithelial cells. Likely to plays a role in the budding process through its association with lipid rafts during intracellular transport. May additionally display a raft-association independent effect on budding. Plays a role in the determination of host range restriction on replication and virulence. Sialidase activity in late endosome/lysosome traffic seems to enhance virus replication.</text>
</comment>
<comment type="catalytic activity">
    <reaction evidence="1">
        <text>Hydrolysis of alpha-(2-&gt;3)-, alpha-(2-&gt;6)-, alpha-(2-&gt;8)- glycosidic linkages of terminal sialic acid residues in oligosaccharides, glycoproteins, glycolipids, colominic acid and synthetic substrates.</text>
        <dbReference type="EC" id="3.2.1.18"/>
    </reaction>
</comment>
<comment type="cofactor">
    <cofactor evidence="1">
        <name>Ca(2+)</name>
        <dbReference type="ChEBI" id="CHEBI:29108"/>
    </cofactor>
</comment>
<comment type="activity regulation">
    <text evidence="1">Inhibited by the neuraminidase inhibitors zanamivir (Relenza) and oseltamivir (Tamiflu). These drugs interfere with the release of progeny virus from infected cells and are effective against all influenza strains. Resistance to neuraminidase inhibitors is quite rare.</text>
</comment>
<comment type="subunit">
    <text evidence="1">Homotetramer.</text>
</comment>
<comment type="subcellular location">
    <subcellularLocation>
        <location evidence="1">Virion membrane</location>
    </subcellularLocation>
    <subcellularLocation>
        <location evidence="1">Host apical cell membrane</location>
        <topology evidence="1">Single-pass type II membrane protein</topology>
    </subcellularLocation>
    <text evidence="1">Preferentially accumulates at the apical plasma membrane in infected polarized epithelial cells, which is the virus assembly site. Uses lipid rafts for cell surface transport and apical sorting. In the virion, forms a mushroom-shaped spike on the surface of the membrane.</text>
</comment>
<comment type="domain">
    <text evidence="1">Intact N-terminus is essential for virion morphogenesis. Possesses two apical sorting signals, one in the ectodomain, which is likely to be a glycan, and the other in the transmembrane domain. The transmembrane domain also plays a role in lipid raft association.</text>
</comment>
<comment type="PTM">
    <text evidence="1">N-glycosylated.</text>
</comment>
<comment type="miscellaneous">
    <text>The influenza A genome consist of 8 RNA segments. Genetic variation of hemagglutinin and/or neuraminidase genes results in the emergence of new influenza strains. The mechanism of variation can be the result of point mutations or the result of genetic reassortment between segments of two different strains.</text>
</comment>
<comment type="similarity">
    <text evidence="1">Belongs to the glycosyl hydrolase 34 family.</text>
</comment>
<accession>Q07585</accession>
<accession>Q0A3Q6</accession>
<name>NRAM_I78AC</name>
<organismHost>
    <name type="scientific">Aves</name>
    <dbReference type="NCBI Taxonomy" id="8782"/>
</organismHost>
<reference key="1">
    <citation type="journal article" date="1993" name="Virology">
        <title>Phylogenetic analysis of the N8 neuraminidase gene of influenza A viruses.</title>
        <authorList>
            <person name="Saito T."/>
            <person name="Kawaoka Y."/>
            <person name="Webster R.G."/>
        </authorList>
    </citation>
    <scope>NUCLEOTIDE SEQUENCE [GENOMIC RNA]</scope>
</reference>
<reference key="2">
    <citation type="journal article" date="2006" name="Science">
        <title>Large-scale sequence analysis of avian influenza isolates.</title>
        <authorList>
            <person name="Obenauer J.C."/>
            <person name="Denson J."/>
            <person name="Mehta P.K."/>
            <person name="Su X."/>
            <person name="Mukatira S."/>
            <person name="Finkelstein D.B."/>
            <person name="Xu X."/>
            <person name="Wang J."/>
            <person name="Ma J."/>
            <person name="Fan Y."/>
            <person name="Rakestraw K.M."/>
            <person name="Webster R.G."/>
            <person name="Hoffmann E."/>
            <person name="Krauss S."/>
            <person name="Zheng J."/>
            <person name="Zhang Z."/>
            <person name="Naeve C.W."/>
        </authorList>
    </citation>
    <scope>NUCLEOTIDE SEQUENCE [GENOMIC RNA]</scope>
</reference>
<reference key="3">
    <citation type="journal article" date="2004" name="Virus Res.">
        <title>Assembly and budding of influenza virus.</title>
        <authorList>
            <person name="Nayak D.P."/>
            <person name="Hui E.K."/>
            <person name="Barman S."/>
        </authorList>
    </citation>
    <scope>REVIEW</scope>
</reference>
<reference key="4">
    <citation type="journal article" date="2005" name="N. Engl. J. Med.">
        <title>Neuraminidase inhibitors for influenza.</title>
        <authorList>
            <person name="Moscona A."/>
        </authorList>
    </citation>
    <scope>REVIEW</scope>
</reference>
<reference key="5">
    <citation type="journal article" date="2005" name="Biol. Pharm. Bull.">
        <title>Sialobiology of influenza: molecular mechanism of host range variation of influenza viruses.</title>
        <authorList>
            <person name="Suzuki Y."/>
        </authorList>
    </citation>
    <scope>REVIEW</scope>
</reference>